<keyword id="KW-0002">3D-structure</keyword>
<keyword id="KW-0963">Cytoplasm</keyword>
<keyword id="KW-0479">Metal-binding</keyword>
<keyword id="KW-0597">Phosphoprotein</keyword>
<keyword id="KW-1185">Reference proteome</keyword>
<keyword id="KW-0677">Repeat</keyword>
<keyword id="KW-0690">Ribosome biogenesis</keyword>
<keyword id="KW-0862">Zinc</keyword>
<keyword id="KW-0863">Zinc-finger</keyword>
<protein>
    <recommendedName>
        <fullName>Cytoplasmic 60S subunit biogenesis factor REI1</fullName>
    </recommendedName>
    <alternativeName>
        <fullName>Required for isotropic bud growth protein 1</fullName>
    </alternativeName>
    <alternativeName>
        <fullName>pre-60S factor REI1</fullName>
    </alternativeName>
</protein>
<organism>
    <name type="scientific">Saccharomyces cerevisiae (strain ATCC 204508 / S288c)</name>
    <name type="common">Baker's yeast</name>
    <dbReference type="NCBI Taxonomy" id="559292"/>
    <lineage>
        <taxon>Eukaryota</taxon>
        <taxon>Fungi</taxon>
        <taxon>Dikarya</taxon>
        <taxon>Ascomycota</taxon>
        <taxon>Saccharomycotina</taxon>
        <taxon>Saccharomycetes</taxon>
        <taxon>Saccharomycetales</taxon>
        <taxon>Saccharomycetaceae</taxon>
        <taxon>Saccharomyces</taxon>
    </lineage>
</organism>
<gene>
    <name type="primary">REI1</name>
    <name type="ordered locus">YBR267W</name>
    <name type="ORF">YBR1736</name>
</gene>
<name>REI1_YEAST</name>
<evidence type="ECO:0000256" key="1">
    <source>
        <dbReference type="SAM" id="MobiDB-lite"/>
    </source>
</evidence>
<evidence type="ECO:0000269" key="2">
    <source>
    </source>
</evidence>
<evidence type="ECO:0000269" key="3">
    <source>
    </source>
</evidence>
<evidence type="ECO:0000269" key="4">
    <source>
    </source>
</evidence>
<evidence type="ECO:0000269" key="5">
    <source>
    </source>
</evidence>
<evidence type="ECO:0000269" key="6">
    <source>
    </source>
</evidence>
<evidence type="ECO:0000269" key="7">
    <source>
    </source>
</evidence>
<evidence type="ECO:0000269" key="8">
    <source>
    </source>
</evidence>
<evidence type="ECO:0000269" key="9">
    <source>
    </source>
</evidence>
<evidence type="ECO:0000269" key="10">
    <source>
    </source>
</evidence>
<evidence type="ECO:0000305" key="11"/>
<evidence type="ECO:0007744" key="12">
    <source>
    </source>
</evidence>
<sequence>MSSSGVYTCNSCVLTFDSSDEQRAHMKSDWHRYNLKRRVAQLPPISFETFDSKVSAAAASTSKSAEKEKPVTKKELKRREKQALLEKKKKLLEIARANMLENMQKSQEGNTPDLSKLSLQENEENKEKEEPKKEEPEQLTEEEMAERVMQEKLRNRVDIPLEQCLFCEHNKHFKDVEENLEHMFRTHGFYIPEQKYLVDKIGLVKYMSEKIGLGNICIVCNYQGRTLTAVRQHMLAKRHCKIPYESEDERLEISEFYDFTSSYANFNSNTTPDNEDDWEDVGSDEAGSDDEDLPQEYLYNDGIELHLPTGIKVGHRSLQRYYKQDLKPEVILTEGQGTLVAAETRSFLPAFDKKGVQTQQRVWQTERFDKKRLDKRSAKFVNNQPHYRDQLLQ</sequence>
<reference key="1">
    <citation type="journal article" date="1993" name="Yeast">
        <title>The complete sequence of a 19,482 bp segment located on the right arm of chromosome II from Saccharomyces cerevisiae.</title>
        <authorList>
            <person name="Doignon F."/>
            <person name="Biteau N."/>
            <person name="Crouzet M."/>
            <person name="Aigle M."/>
        </authorList>
    </citation>
    <scope>NUCLEOTIDE SEQUENCE [GENOMIC DNA]</scope>
    <source>
        <strain>ATCC 204508 / S288c</strain>
    </source>
</reference>
<reference key="2">
    <citation type="journal article" date="1994" name="EMBO J.">
        <title>Complete DNA sequence of yeast chromosome II.</title>
        <authorList>
            <person name="Feldmann H."/>
            <person name="Aigle M."/>
            <person name="Aljinovic G."/>
            <person name="Andre B."/>
            <person name="Baclet M.C."/>
            <person name="Barthe C."/>
            <person name="Baur A."/>
            <person name="Becam A.-M."/>
            <person name="Biteau N."/>
            <person name="Boles E."/>
            <person name="Brandt T."/>
            <person name="Brendel M."/>
            <person name="Brueckner M."/>
            <person name="Bussereau F."/>
            <person name="Christiansen C."/>
            <person name="Contreras R."/>
            <person name="Crouzet M."/>
            <person name="Cziepluch C."/>
            <person name="Demolis N."/>
            <person name="Delaveau T."/>
            <person name="Doignon F."/>
            <person name="Domdey H."/>
            <person name="Duesterhus S."/>
            <person name="Dubois E."/>
            <person name="Dujon B."/>
            <person name="El Bakkoury M."/>
            <person name="Entian K.-D."/>
            <person name="Feuermann M."/>
            <person name="Fiers W."/>
            <person name="Fobo G.M."/>
            <person name="Fritz C."/>
            <person name="Gassenhuber J."/>
            <person name="Glansdorff N."/>
            <person name="Goffeau A."/>
            <person name="Grivell L.A."/>
            <person name="de Haan M."/>
            <person name="Hein C."/>
            <person name="Herbert C.J."/>
            <person name="Hollenberg C.P."/>
            <person name="Holmstroem K."/>
            <person name="Jacq C."/>
            <person name="Jacquet M."/>
            <person name="Jauniaux J.-C."/>
            <person name="Jonniaux J.-L."/>
            <person name="Kallesoee T."/>
            <person name="Kiesau P."/>
            <person name="Kirchrath L."/>
            <person name="Koetter P."/>
            <person name="Korol S."/>
            <person name="Liebl S."/>
            <person name="Logghe M."/>
            <person name="Lohan A.J.E."/>
            <person name="Louis E.J."/>
            <person name="Li Z.Y."/>
            <person name="Maat M.J."/>
            <person name="Mallet L."/>
            <person name="Mannhaupt G."/>
            <person name="Messenguy F."/>
            <person name="Miosga T."/>
            <person name="Molemans F."/>
            <person name="Mueller S."/>
            <person name="Nasr F."/>
            <person name="Obermaier B."/>
            <person name="Perea J."/>
            <person name="Pierard A."/>
            <person name="Piravandi E."/>
            <person name="Pohl F.M."/>
            <person name="Pohl T.M."/>
            <person name="Potier S."/>
            <person name="Proft M."/>
            <person name="Purnelle B."/>
            <person name="Ramezani Rad M."/>
            <person name="Rieger M."/>
            <person name="Rose M."/>
            <person name="Schaaff-Gerstenschlaeger I."/>
            <person name="Scherens B."/>
            <person name="Schwarzlose C."/>
            <person name="Skala J."/>
            <person name="Slonimski P.P."/>
            <person name="Smits P.H.M."/>
            <person name="Souciet J.-L."/>
            <person name="Steensma H.Y."/>
            <person name="Stucka R."/>
            <person name="Urrestarazu L.A."/>
            <person name="van der Aart Q.J.M."/>
            <person name="Van Dyck L."/>
            <person name="Vassarotti A."/>
            <person name="Vetter I."/>
            <person name="Vierendeels F."/>
            <person name="Vissers S."/>
            <person name="Wagner G."/>
            <person name="de Wergifosse P."/>
            <person name="Wolfe K.H."/>
            <person name="Zagulski M."/>
            <person name="Zimmermann F.K."/>
            <person name="Mewes H.-W."/>
            <person name="Kleine K."/>
        </authorList>
    </citation>
    <scope>NUCLEOTIDE SEQUENCE [LARGE SCALE GENOMIC DNA]</scope>
    <source>
        <strain>ATCC 204508 / S288c</strain>
    </source>
</reference>
<reference key="3">
    <citation type="submission" date="1997-03" db="EMBL/GenBank/DDBJ databases">
        <authorList>
            <person name="Aigle M."/>
            <person name="Baclet M.C."/>
            <person name="Barthe C."/>
            <person name="Biteau N."/>
            <person name="Crouzet M."/>
            <person name="Doignon F."/>
        </authorList>
    </citation>
    <scope>SEQUENCE REVISION TO N-TERMINUS</scope>
</reference>
<reference key="4">
    <citation type="journal article" date="2014" name="G3 (Bethesda)">
        <title>The reference genome sequence of Saccharomyces cerevisiae: Then and now.</title>
        <authorList>
            <person name="Engel S.R."/>
            <person name="Dietrich F.S."/>
            <person name="Fisk D.G."/>
            <person name="Binkley G."/>
            <person name="Balakrishnan R."/>
            <person name="Costanzo M.C."/>
            <person name="Dwight S.S."/>
            <person name="Hitz B.C."/>
            <person name="Karra K."/>
            <person name="Nash R.S."/>
            <person name="Weng S."/>
            <person name="Wong E.D."/>
            <person name="Lloyd P."/>
            <person name="Skrzypek M.S."/>
            <person name="Miyasato S.R."/>
            <person name="Simison M."/>
            <person name="Cherry J.M."/>
        </authorList>
    </citation>
    <scope>GENOME REANNOTATION</scope>
    <scope>SEQUENCE REVISION TO 152-153</scope>
    <source>
        <strain>ATCC 204508 / S288c</strain>
    </source>
</reference>
<reference key="5">
    <citation type="journal article" date="1997" name="Nucleic Acids Res.">
        <title>Variations of the C2H2 zinc finger motif in the yeast genome and classification of yeast zinc finger proteins.</title>
        <authorList>
            <person name="Boehm S."/>
            <person name="Frishman D."/>
            <person name="Mewes H.-W."/>
        </authorList>
    </citation>
    <scope>DOMAIN</scope>
</reference>
<reference key="6">
    <citation type="journal article" date="2003" name="Nature">
        <title>Global analysis of protein localization in budding yeast.</title>
        <authorList>
            <person name="Huh W.-K."/>
            <person name="Falvo J.V."/>
            <person name="Gerke L.C."/>
            <person name="Carroll A.S."/>
            <person name="Howson R.W."/>
            <person name="Weissman J.S."/>
            <person name="O'Shea E.K."/>
        </authorList>
    </citation>
    <scope>SUBCELLULAR LOCATION [LARGE SCALE ANALYSIS]</scope>
</reference>
<reference key="7">
    <citation type="journal article" date="2003" name="Nature">
        <title>Global analysis of protein expression in yeast.</title>
        <authorList>
            <person name="Ghaemmaghami S."/>
            <person name="Huh W.-K."/>
            <person name="Bower K."/>
            <person name="Howson R.W."/>
            <person name="Belle A."/>
            <person name="Dephoure N."/>
            <person name="O'Shea E.K."/>
            <person name="Weissman J.S."/>
        </authorList>
    </citation>
    <scope>LEVEL OF PROTEIN EXPRESSION [LARGE SCALE ANALYSIS]</scope>
</reference>
<reference key="8">
    <citation type="journal article" date="2004" name="Cell Struct. Funct.">
        <title>Ybr267w is a new cytoplasmic protein belonging to the mitotic signaling network of Saccharomyces cerevisiae.</title>
        <authorList>
            <person name="Iwase M."/>
            <person name="Toh-e A."/>
        </authorList>
    </citation>
    <scope>FUNCTION</scope>
    <scope>SUBCELLULAR LOCATION</scope>
</reference>
<reference key="9">
    <citation type="journal article" date="2006" name="J. Cell Biol.">
        <title>A functional network involved in the recycling of nucleocytoplasmic pre-60S factors.</title>
        <authorList>
            <person name="Lebreton A."/>
            <person name="Saveanu C."/>
            <person name="Decourty L."/>
            <person name="Rain J.-C."/>
            <person name="Jacquier A."/>
            <person name="Fromont-Racine M."/>
        </authorList>
    </citation>
    <scope>FUNCTION</scope>
    <scope>INTERACTION WITH RPL24</scope>
    <scope>ASSOCIATION WITH PRE-60S PARTICLES</scope>
</reference>
<reference key="10">
    <citation type="journal article" date="2006" name="Mol. Cell. Biol.">
        <title>Nuclear recycling of the pre-60S ribosomal subunit-associated factor Arx1 depends on Rei1 in Saccharomyces cerevisiae.</title>
        <authorList>
            <person name="Hung N.J."/>
            <person name="Johnson A.W."/>
        </authorList>
    </citation>
    <scope>FUNCTION</scope>
    <scope>INTERACTION WITH ARX1</scope>
    <scope>ASSOCIATION WITH PRE-60S PARTICLES</scope>
</reference>
<reference key="11">
    <citation type="journal article" date="2007" name="RNA">
        <title>The Hsp40 chaperone Jjj1 is required for the nucleo-cytoplasmic recycling of preribosomal factors in Saccharomyces cerevisiae.</title>
        <authorList>
            <person name="Demoinet E."/>
            <person name="Jacquier A."/>
            <person name="Lutfalla G."/>
            <person name="Fromont-Racine M."/>
        </authorList>
    </citation>
    <scope>FUNCTION</scope>
</reference>
<reference key="12">
    <citation type="journal article" date="2008" name="Mol. Cell. Proteomics">
        <title>A multidimensional chromatography technology for in-depth phosphoproteome analysis.</title>
        <authorList>
            <person name="Albuquerque C.P."/>
            <person name="Smolka M.B."/>
            <person name="Payne S.H."/>
            <person name="Bafna V."/>
            <person name="Eng J."/>
            <person name="Zhou H."/>
        </authorList>
    </citation>
    <scope>PHOSPHORYLATION [LARGE SCALE ANALYSIS] AT THR-140</scope>
    <scope>IDENTIFICATION BY MASS SPECTROMETRY [LARGE SCALE ANALYSIS]</scope>
</reference>
<reference key="13">
    <citation type="journal article" date="2009" name="Mol. Cell. Biol.">
        <title>Functional redundancy of yeast proteins Reh1 and Rei1 in cytoplasmic 60S subunit maturation.</title>
        <authorList>
            <person name="Parnell K.M."/>
            <person name="Bass B.L."/>
        </authorList>
    </citation>
    <scope>FUNCTION</scope>
    <scope>ASSOCIATION WITH PRE-60S PARTICLES</scope>
</reference>
<reference key="14">
    <citation type="journal article" date="2010" name="J. Biol. Chem.">
        <title>The cytosolic J-protein, Jjj1, and Rei1 function in the removal of the pre-60 S subunit factor Arx1.</title>
        <authorList>
            <person name="Meyer A.E."/>
            <person name="Hoover L.A."/>
            <person name="Craig E.A."/>
        </authorList>
    </citation>
    <scope>FUNCTION</scope>
    <scope>INTERACTION WITH JJJ1</scope>
</reference>
<reference key="15">
    <citation type="journal article" date="2012" name="Nat. Struct. Mol. Biol.">
        <title>Cryo-EM structures of Arx1 and maturation factors Rei1 and Jjj1 bound to the 60S ribosomal subunit.</title>
        <authorList>
            <person name="Greber B.J."/>
            <person name="Boehringer D."/>
            <person name="Montellese C."/>
            <person name="Ban N."/>
        </authorList>
    </citation>
    <scope>STRUCTURE BY ELECTRON MICROSCOPY</scope>
    <scope>FUNCTION</scope>
    <scope>INTERACTION WITH ARX1</scope>
</reference>
<comment type="function">
    <text evidence="4 5 6 7 8 9 10">Pre-60S-associated factor involved in the cytoplasmic maturation of the 60S subunit. Involved in the dissociation and recycling of other late pre-60S factors like ARX1, TIF6 and ALB1 before newly synthesized large ribosomal subunits enter translation. Cooperates with the co-chaperone JJJ1 in the release of the nuclear-export factor ARX1. May act redundantly with REH1 to directly promote a stabilizing structural rearrangement in cytoplasmic 60S subunit maturation independent on ARX1 recycling.</text>
</comment>
<comment type="subunit">
    <text evidence="5 6 9 10">Associates with nascent pre-60S particles that have not yet entered the translating pool, and is released from mature 60S subunits. Interacts with pre-60S factors ARX1 and RPL24. Interacts with JJJ1.</text>
</comment>
<comment type="interaction">
    <interactant intactId="EBI-21136">
        <id>P38344</id>
    </interactant>
    <interactant intactId="EBI-31385">
        <id>Q03862</id>
        <label>ARX1</label>
    </interactant>
    <organismsDiffer>false</organismsDiffer>
    <experiments>6</experiments>
</comment>
<comment type="interaction">
    <interactant intactId="EBI-21136">
        <id>P38344</id>
    </interactant>
    <interactant intactId="EBI-29183">
        <id>P53863</id>
        <label>JJJ1</label>
    </interactant>
    <organismsDiffer>false</organismsDiffer>
    <experiments>6</experiments>
</comment>
<comment type="interaction">
    <interactant intactId="EBI-21136">
        <id>P38344</id>
    </interactant>
    <interactant intactId="EBI-23885">
        <id>P53145</id>
        <label>LSG1</label>
    </interactant>
    <organismsDiffer>false</organismsDiffer>
    <experiments>6</experiments>
</comment>
<comment type="interaction">
    <interactant intactId="EBI-21136">
        <id>P38344</id>
    </interactant>
    <interactant intactId="EBI-11850">
        <id>P25293</id>
        <label>NAP1</label>
    </interactant>
    <organismsDiffer>false</organismsDiffer>
    <experiments>3</experiments>
</comment>
<comment type="subcellular location">
    <subcellularLocation>
        <location evidence="2 4">Cytoplasm</location>
    </subcellularLocation>
</comment>
<comment type="miscellaneous">
    <text evidence="3">Present with 830 molecules/cell in log phase SD medium.</text>
</comment>
<comment type="similarity">
    <text evidence="11">Belongs to the REI1 family.</text>
</comment>
<proteinExistence type="evidence at protein level"/>
<dbReference type="EMBL" id="X70529">
    <property type="protein sequence ID" value="CAA49931.1"/>
    <property type="molecule type" value="Genomic_DNA"/>
</dbReference>
<dbReference type="EMBL" id="Z36135">
    <property type="protein sequence ID" value="CAA85229.1"/>
    <property type="molecule type" value="Genomic_DNA"/>
</dbReference>
<dbReference type="EMBL" id="BK006936">
    <property type="protein sequence ID" value="DAA07383.2"/>
    <property type="molecule type" value="Genomic_DNA"/>
</dbReference>
<dbReference type="PIR" id="S77691">
    <property type="entry name" value="S77691"/>
</dbReference>
<dbReference type="RefSeq" id="NP_009825.4">
    <property type="nucleotide sequence ID" value="NM_001178615.4"/>
</dbReference>
<dbReference type="PDB" id="5APN">
    <property type="method" value="EM"/>
    <property type="resolution" value="3.91 A"/>
    <property type="chains" value="y=1-393"/>
</dbReference>
<dbReference type="PDB" id="6RZZ">
    <property type="method" value="EM"/>
    <property type="resolution" value="3.20 A"/>
    <property type="chains" value="u=1-393"/>
</dbReference>
<dbReference type="PDBsum" id="5APN"/>
<dbReference type="PDBsum" id="6RZZ"/>
<dbReference type="EMDB" id="EMD-10068"/>
<dbReference type="EMDB" id="EMD-3151"/>
<dbReference type="EMDB" id="EMD-3152"/>
<dbReference type="EMDB" id="EMD-3153"/>
<dbReference type="SMR" id="P38344"/>
<dbReference type="BioGRID" id="32962">
    <property type="interactions" value="466"/>
</dbReference>
<dbReference type="DIP" id="DIP-6347N"/>
<dbReference type="FunCoup" id="P38344">
    <property type="interactions" value="1009"/>
</dbReference>
<dbReference type="IntAct" id="P38344">
    <property type="interactions" value="17"/>
</dbReference>
<dbReference type="MINT" id="P38344"/>
<dbReference type="STRING" id="4932.YBR267W"/>
<dbReference type="iPTMnet" id="P38344"/>
<dbReference type="PaxDb" id="4932-YBR267W"/>
<dbReference type="PeptideAtlas" id="P38344"/>
<dbReference type="EnsemblFungi" id="YBR267W_mRNA">
    <property type="protein sequence ID" value="YBR267W"/>
    <property type="gene ID" value="YBR267W"/>
</dbReference>
<dbReference type="GeneID" id="852569"/>
<dbReference type="KEGG" id="sce:YBR267W"/>
<dbReference type="AGR" id="SGD:S000000471"/>
<dbReference type="SGD" id="S000000471">
    <property type="gene designation" value="REI1"/>
</dbReference>
<dbReference type="VEuPathDB" id="FungiDB:YBR267W"/>
<dbReference type="eggNOG" id="KOG2785">
    <property type="taxonomic scope" value="Eukaryota"/>
</dbReference>
<dbReference type="GeneTree" id="ENSGT00390000018047"/>
<dbReference type="HOGENOM" id="CLU_018787_1_1_1"/>
<dbReference type="InParanoid" id="P38344"/>
<dbReference type="OMA" id="WTQTQQQ"/>
<dbReference type="OrthoDB" id="19329at2759"/>
<dbReference type="BioCyc" id="YEAST:G3O-29188-MONOMER"/>
<dbReference type="BioGRID-ORCS" id="852569">
    <property type="hits" value="0 hits in 13 CRISPR screens"/>
</dbReference>
<dbReference type="PRO" id="PR:P38344"/>
<dbReference type="Proteomes" id="UP000002311">
    <property type="component" value="Chromosome II"/>
</dbReference>
<dbReference type="RNAct" id="P38344">
    <property type="molecule type" value="protein"/>
</dbReference>
<dbReference type="GO" id="GO:0005737">
    <property type="term" value="C:cytoplasm"/>
    <property type="evidence" value="ECO:0000314"/>
    <property type="project" value="SGD"/>
</dbReference>
<dbReference type="GO" id="GO:0030687">
    <property type="term" value="C:preribosome, large subunit precursor"/>
    <property type="evidence" value="ECO:0000314"/>
    <property type="project" value="SGD"/>
</dbReference>
<dbReference type="GO" id="GO:0043565">
    <property type="term" value="F:sequence-specific DNA binding"/>
    <property type="evidence" value="ECO:0007005"/>
    <property type="project" value="SGD"/>
</dbReference>
<dbReference type="GO" id="GO:0008270">
    <property type="term" value="F:zinc ion binding"/>
    <property type="evidence" value="ECO:0007669"/>
    <property type="project" value="UniProtKB-KW"/>
</dbReference>
<dbReference type="GO" id="GO:0007117">
    <property type="term" value="P:budding cell bud growth"/>
    <property type="evidence" value="ECO:0000316"/>
    <property type="project" value="SGD"/>
</dbReference>
<dbReference type="GO" id="GO:0000278">
    <property type="term" value="P:mitotic cell cycle"/>
    <property type="evidence" value="ECO:0000316"/>
    <property type="project" value="SGD"/>
</dbReference>
<dbReference type="GO" id="GO:0006913">
    <property type="term" value="P:nucleocytoplasmic transport"/>
    <property type="evidence" value="ECO:0000315"/>
    <property type="project" value="SGD"/>
</dbReference>
<dbReference type="GO" id="GO:0042273">
    <property type="term" value="P:ribosomal large subunit biogenesis"/>
    <property type="evidence" value="ECO:0000315"/>
    <property type="project" value="SGD"/>
</dbReference>
<dbReference type="InterPro" id="IPR003604">
    <property type="entry name" value="Matrin/U1-like-C_Znf_C2H2"/>
</dbReference>
<dbReference type="InterPro" id="IPR041661">
    <property type="entry name" value="ZN622/Rei1/Reh1_Znf-C2H2"/>
</dbReference>
<dbReference type="InterPro" id="IPR040025">
    <property type="entry name" value="Znf622/Rei1/Reh1"/>
</dbReference>
<dbReference type="InterPro" id="IPR036236">
    <property type="entry name" value="Znf_C2H2_sf"/>
</dbReference>
<dbReference type="InterPro" id="IPR013087">
    <property type="entry name" value="Znf_C2H2_type"/>
</dbReference>
<dbReference type="PANTHER" id="PTHR13182:SF21">
    <property type="entry name" value="CYTOPLASMIC 60S SUBUNIT BIOGENESIS FACTOR REI1"/>
    <property type="match status" value="1"/>
</dbReference>
<dbReference type="PANTHER" id="PTHR13182">
    <property type="entry name" value="ZINC FINGER PROTEIN 622"/>
    <property type="match status" value="1"/>
</dbReference>
<dbReference type="Pfam" id="PF12756">
    <property type="entry name" value="zf-C2H2_2"/>
    <property type="match status" value="1"/>
</dbReference>
<dbReference type="SMART" id="SM00355">
    <property type="entry name" value="ZnF_C2H2"/>
    <property type="match status" value="3"/>
</dbReference>
<dbReference type="SMART" id="SM00451">
    <property type="entry name" value="ZnF_U1"/>
    <property type="match status" value="1"/>
</dbReference>
<dbReference type="SUPFAM" id="SSF57667">
    <property type="entry name" value="beta-beta-alpha zinc fingers"/>
    <property type="match status" value="1"/>
</dbReference>
<dbReference type="PROSITE" id="PS00028">
    <property type="entry name" value="ZINC_FINGER_C2H2_1"/>
    <property type="match status" value="1"/>
</dbReference>
<feature type="chain" id="PRO_0000202529" description="Cytoplasmic 60S subunit biogenesis factor REI1">
    <location>
        <begin position="1"/>
        <end position="393"/>
    </location>
</feature>
<feature type="zinc finger region" description="C2H2-type 1">
    <location>
        <begin position="7"/>
        <end position="31"/>
    </location>
</feature>
<feature type="zinc finger region" description="C2H2-type 2">
    <location>
        <begin position="162"/>
        <end position="187"/>
    </location>
</feature>
<feature type="zinc finger region" description="C2H2-type 3">
    <location>
        <begin position="215"/>
        <end position="239"/>
    </location>
</feature>
<feature type="region of interest" description="Disordered" evidence="1">
    <location>
        <begin position="55"/>
        <end position="82"/>
    </location>
</feature>
<feature type="region of interest" description="Disordered" evidence="1">
    <location>
        <begin position="102"/>
        <end position="145"/>
    </location>
</feature>
<feature type="region of interest" description="Disordered" evidence="1">
    <location>
        <begin position="268"/>
        <end position="293"/>
    </location>
</feature>
<feature type="compositionally biased region" description="Basic and acidic residues" evidence="1">
    <location>
        <begin position="64"/>
        <end position="82"/>
    </location>
</feature>
<feature type="compositionally biased region" description="Polar residues" evidence="1">
    <location>
        <begin position="102"/>
        <end position="113"/>
    </location>
</feature>
<feature type="compositionally biased region" description="Basic and acidic residues" evidence="1">
    <location>
        <begin position="123"/>
        <end position="136"/>
    </location>
</feature>
<feature type="compositionally biased region" description="Acidic residues" evidence="1">
    <location>
        <begin position="273"/>
        <end position="293"/>
    </location>
</feature>
<feature type="modified residue" description="Phosphothreonine" evidence="12">
    <location>
        <position position="140"/>
    </location>
</feature>
<feature type="sequence conflict" description="In Ref. 1; CAA49931 and 2; CAA85229." evidence="11" ref="1 2">
    <original>KL</original>
    <variation>NV</variation>
    <location>
        <begin position="152"/>
        <end position="153"/>
    </location>
</feature>
<accession>P38344</accession>
<accession>D6VQR3</accession>